<proteinExistence type="evidence at protein level"/>
<reference key="1">
    <citation type="journal article" date="1995" name="FEBS Lett.">
        <title>An actin-related protein from Dictyostelium discoideum is developmentally regulated and associated with mitochondria.</title>
        <authorList>
            <person name="Murgia I."/>
            <person name="Maciver S.K."/>
            <person name="Morandini P."/>
        </authorList>
    </citation>
    <scope>NUCLEOTIDE SEQUENCE [MRNA]</scope>
    <source>
        <strain>AX3</strain>
    </source>
</reference>
<reference key="2">
    <citation type="journal article" date="2005" name="Nature">
        <title>The genome of the social amoeba Dictyostelium discoideum.</title>
        <authorList>
            <person name="Eichinger L."/>
            <person name="Pachebat J.A."/>
            <person name="Gloeckner G."/>
            <person name="Rajandream M.A."/>
            <person name="Sucgang R."/>
            <person name="Berriman M."/>
            <person name="Song J."/>
            <person name="Olsen R."/>
            <person name="Szafranski K."/>
            <person name="Xu Q."/>
            <person name="Tunggal B."/>
            <person name="Kummerfeld S."/>
            <person name="Madera M."/>
            <person name="Konfortov B.A."/>
            <person name="Rivero F."/>
            <person name="Bankier A.T."/>
            <person name="Lehmann R."/>
            <person name="Hamlin N."/>
            <person name="Davies R."/>
            <person name="Gaudet P."/>
            <person name="Fey P."/>
            <person name="Pilcher K."/>
            <person name="Chen G."/>
            <person name="Saunders D."/>
            <person name="Sodergren E.J."/>
            <person name="Davis P."/>
            <person name="Kerhornou A."/>
            <person name="Nie X."/>
            <person name="Hall N."/>
            <person name="Anjard C."/>
            <person name="Hemphill L."/>
            <person name="Bason N."/>
            <person name="Farbrother P."/>
            <person name="Desany B."/>
            <person name="Just E."/>
            <person name="Morio T."/>
            <person name="Rost R."/>
            <person name="Churcher C.M."/>
            <person name="Cooper J."/>
            <person name="Haydock S."/>
            <person name="van Driessche N."/>
            <person name="Cronin A."/>
            <person name="Goodhead I."/>
            <person name="Muzny D.M."/>
            <person name="Mourier T."/>
            <person name="Pain A."/>
            <person name="Lu M."/>
            <person name="Harper D."/>
            <person name="Lindsay R."/>
            <person name="Hauser H."/>
            <person name="James K.D."/>
            <person name="Quiles M."/>
            <person name="Madan Babu M."/>
            <person name="Saito T."/>
            <person name="Buchrieser C."/>
            <person name="Wardroper A."/>
            <person name="Felder M."/>
            <person name="Thangavelu M."/>
            <person name="Johnson D."/>
            <person name="Knights A."/>
            <person name="Loulseged H."/>
            <person name="Mungall K.L."/>
            <person name="Oliver K."/>
            <person name="Price C."/>
            <person name="Quail M.A."/>
            <person name="Urushihara H."/>
            <person name="Hernandez J."/>
            <person name="Rabbinowitsch E."/>
            <person name="Steffen D."/>
            <person name="Sanders M."/>
            <person name="Ma J."/>
            <person name="Kohara Y."/>
            <person name="Sharp S."/>
            <person name="Simmonds M.N."/>
            <person name="Spiegler S."/>
            <person name="Tivey A."/>
            <person name="Sugano S."/>
            <person name="White B."/>
            <person name="Walker D."/>
            <person name="Woodward J.R."/>
            <person name="Winckler T."/>
            <person name="Tanaka Y."/>
            <person name="Shaulsky G."/>
            <person name="Schleicher M."/>
            <person name="Weinstock G.M."/>
            <person name="Rosenthal A."/>
            <person name="Cox E.C."/>
            <person name="Chisholm R.L."/>
            <person name="Gibbs R.A."/>
            <person name="Loomis W.F."/>
            <person name="Platzer M."/>
            <person name="Kay R.R."/>
            <person name="Williams J.G."/>
            <person name="Dear P.H."/>
            <person name="Noegel A.A."/>
            <person name="Barrell B.G."/>
            <person name="Kuspa A."/>
        </authorList>
    </citation>
    <scope>NUCLEOTIDE SEQUENCE [LARGE SCALE GENOMIC DNA]</scope>
    <source>
        <strain>AX4</strain>
    </source>
</reference>
<reference key="3">
    <citation type="submission" date="2009-07" db="UniProtKB">
        <authorList>
            <person name="Bienvenut W.V."/>
            <person name="Ura S."/>
            <person name="Insall R.H."/>
        </authorList>
    </citation>
    <scope>PROTEIN SEQUENCE OF 1-20; 199-209 AND 360-374</scope>
    <scope>ACETYLATION AT MET-1</scope>
    <scope>IDENTIFICATION BY MASS SPECTROMETRY</scope>
    <source>
        <strain>AX2</strain>
    </source>
</reference>
<reference key="4">
    <citation type="journal article" date="2001" name="J. Cell Biol.">
        <title>The Dictyostelium CARMIL protein links capping protein and the Arp2/3 complex to type I myosins through their SH3 domains.</title>
        <authorList>
            <person name="Jung G."/>
            <person name="Remmert K."/>
            <person name="Wu X."/>
            <person name="Volosky J.M."/>
            <person name="Hammer J.A. III"/>
        </authorList>
    </citation>
    <scope>PROTEIN SEQUENCE OF 276-298</scope>
    <scope>SUBCELLULAR LOCATION</scope>
    <scope>SUBUNIT</scope>
</reference>
<reference key="5">
    <citation type="journal article" date="2001" name="Cell Motil. Cytoskeleton">
        <title>Dynamics of the Dictyostelium Arp2/3 complex in endocytosis, cytokinesis, and chemotaxis.</title>
        <authorList>
            <person name="Insall R."/>
            <person name="Mueller-Taubenberger A."/>
            <person name="Machesky L."/>
            <person name="Koehler J."/>
            <person name="Simmeth E."/>
            <person name="Atkinson S.J."/>
            <person name="Weber I."/>
            <person name="Gerisch G."/>
        </authorList>
    </citation>
    <scope>IDENTIFICATION IN THE ARP2/3 COMPLEX</scope>
    <scope>SUBCELLULAR LOCATION</scope>
</reference>
<reference key="6">
    <citation type="journal article" date="2006" name="Mol. Cell. Proteomics">
        <title>Proteomics fingerprinting of phagosome maturation and evidence for the role of a Galpha during uptake.</title>
        <authorList>
            <person name="Gotthardt D."/>
            <person name="Blancheteau V."/>
            <person name="Bosserhoff A."/>
            <person name="Ruppert T."/>
            <person name="Delorenzi M."/>
            <person name="Soldati T."/>
        </authorList>
    </citation>
    <scope>IDENTIFICATION BY MASS SPECTROMETRY [LARGE SCALE ANALYSIS]</scope>
    <source>
        <strain>AX2</strain>
    </source>
</reference>
<reference key="7">
    <citation type="journal article" date="2007" name="Protein Expr. Purif.">
        <title>Vectors for expression of proteins with single or combinatorial fluorescent protein and tandem affinity purification tags in Dictyostelium.</title>
        <authorList>
            <person name="Meima M.E."/>
            <person name="Weening K.E."/>
            <person name="Schaap P."/>
        </authorList>
    </citation>
    <scope>IDENTIFICATION IN THE ARP2/3 COMPLEX</scope>
    <scope>IDENTIFICATION BY MASS SPECTROMETRY</scope>
</reference>
<organism>
    <name type="scientific">Dictyostelium discoideum</name>
    <name type="common">Social amoeba</name>
    <dbReference type="NCBI Taxonomy" id="44689"/>
    <lineage>
        <taxon>Eukaryota</taxon>
        <taxon>Amoebozoa</taxon>
        <taxon>Evosea</taxon>
        <taxon>Eumycetozoa</taxon>
        <taxon>Dictyostelia</taxon>
        <taxon>Dictyosteliales</taxon>
        <taxon>Dictyosteliaceae</taxon>
        <taxon>Dictyostelium</taxon>
    </lineage>
</organism>
<evidence type="ECO:0000269" key="1">
    <source>
    </source>
</evidence>
<evidence type="ECO:0000269" key="2">
    <source>
    </source>
</evidence>
<evidence type="ECO:0000269" key="3">
    <source>
    </source>
</evidence>
<evidence type="ECO:0000269" key="4">
    <source ref="3"/>
</evidence>
<evidence type="ECO:0000305" key="5"/>
<accession>P42528</accession>
<accession>Q54QJ1</accession>
<sequence length="418" mass="46698">MNPASGLPAVVIDNGTGYTKMGYAGNNDPSFIIPTTIATQSSKGKQTAASQKKGVEDLDFFIGDEAIANSKTYDMTNPVKHGQIENWTHMEQYWEHCVFKYLRCEPEDHYFLLTEPPLNAPENREFTAEIMFETFNVPGLYIAVQAVLALAASWTSKNAEKTLTGTVIDSGDGVTHVIPISEGYVIGSSIKHIPIAGRDISSYVQQIMREREPNIPPAESLEIAKRVKEQYSYVCPDIVKEFGKYDSEPDKWIKTINAQDSVTKKPFSYDVGYERFLGPELFFNPEIASSDYLTPLPKVVDDTIQSCPIDCRRGLYKNIVLSGGSTMFKDFGKRLQRDVKRSVDYRIKRSEELSGGKIKAVPLAVNVISHNMQRYAVWFGGSMLASTPEFYNVCHTKAQYDEIGPSICRFNTVIGGIN</sequence>
<name>ARP3_DICDI</name>
<feature type="chain" id="PRO_0000089086" description="Actin-related protein 3">
    <location>
        <begin position="1"/>
        <end position="418"/>
    </location>
</feature>
<feature type="modified residue" description="N-acetylmethionine" evidence="4">
    <location>
        <position position="1"/>
    </location>
</feature>
<gene>
    <name type="primary">arpC</name>
    <name type="synonym">aclA</name>
    <name type="synonym">act</name>
    <name type="ORF">DDB_G0283755</name>
</gene>
<protein>
    <recommendedName>
        <fullName>Actin-related protein 3</fullName>
    </recommendedName>
    <alternativeName>
        <fullName>Actin-like protein 3</fullName>
    </alternativeName>
    <alternativeName>
        <fullName>Actin-related protein C</fullName>
    </alternativeName>
</protein>
<keyword id="KW-0007">Acetylation</keyword>
<keyword id="KW-0009">Actin-binding</keyword>
<keyword id="KW-0067">ATP-binding</keyword>
<keyword id="KW-0966">Cell projection</keyword>
<keyword id="KW-0963">Cytoplasm</keyword>
<keyword id="KW-0206">Cytoskeleton</keyword>
<keyword id="KW-0903">Direct protein sequencing</keyword>
<keyword id="KW-0547">Nucleotide-binding</keyword>
<keyword id="KW-1185">Reference proteome</keyword>
<keyword id="KW-0346">Stress response</keyword>
<comment type="function">
    <text>Functions as ATP-binding component of the Arp2/3 complex which is involved in regulation of actin polymerization and together with an activating nucleation-promoting factor (NPF) mediates the formation of branched actin networks. Seems to contact the pointed end of the daughter actin filament. The Arp2/3 complex is involved in organizing the actin system in cell motility and chemotaxis, in phagocytosis and macropinocytosis, at late steps of endosome processing, and in mitosis. In concert with a group of other proteins, the Arp2/3 complex plays a general role in the rapid activation and adaptation of the actin system to its multiple functions.</text>
</comment>
<comment type="subunit">
    <text evidence="1 2 3">Component of the Arp2/3 complex composed of arpB/Arp2, arpC/Arp3, arcA/p41-arc, arcB/p34-arc, arcC/p21-arc, arcD/p20-arc and arcE/p16-arc. Interacts with carmil (via the region between the LRR domain and COOH-terminal proline-rich domain); carmil is required for Arp2/3-dependent actin nucleation. Arp2/3 complex, MyoB, MyoC, and the alpha and beta subunits of capping protein all form a larger complex with carmil.</text>
</comment>
<comment type="subcellular location">
    <subcellularLocation>
        <location evidence="2">Cytoplasm</location>
        <location evidence="2">Cytoskeleton</location>
    </subcellularLocation>
    <subcellularLocation>
        <location evidence="1">Cytoplasm</location>
        <location evidence="1">Cytosol</location>
    </subcellularLocation>
    <subcellularLocation>
        <location evidence="1">Cytoplasm</location>
        <location evidence="1">Cell cortex</location>
    </subcellularLocation>
    <subcellularLocation>
        <location evidence="1">Cell projection</location>
        <location evidence="1">Pseudopodium</location>
    </subcellularLocation>
</comment>
<comment type="induction">
    <text>By starvation.</text>
</comment>
<comment type="similarity">
    <text evidence="5">Belongs to the actin family. ARP3 subfamily.</text>
</comment>
<dbReference type="EMBL" id="Z46418">
    <property type="protein sequence ID" value="CAA86553.1"/>
    <property type="molecule type" value="mRNA"/>
</dbReference>
<dbReference type="EMBL" id="AAFI02000057">
    <property type="protein sequence ID" value="EAL65492.1"/>
    <property type="molecule type" value="Genomic_DNA"/>
</dbReference>
<dbReference type="PIR" id="S69002">
    <property type="entry name" value="S48844"/>
</dbReference>
<dbReference type="RefSeq" id="XP_638880.1">
    <property type="nucleotide sequence ID" value="XM_633788.1"/>
</dbReference>
<dbReference type="SMR" id="P42528"/>
<dbReference type="FunCoup" id="P42528">
    <property type="interactions" value="640"/>
</dbReference>
<dbReference type="STRING" id="44689.P42528"/>
<dbReference type="PaxDb" id="44689-DDB0219936"/>
<dbReference type="EnsemblProtists" id="EAL65492">
    <property type="protein sequence ID" value="EAL65492"/>
    <property type="gene ID" value="DDB_G0283755"/>
</dbReference>
<dbReference type="GeneID" id="8624278"/>
<dbReference type="KEGG" id="ddi:DDB_G0283755"/>
<dbReference type="dictyBase" id="DDB_G0283755">
    <property type="gene designation" value="arpC"/>
</dbReference>
<dbReference type="VEuPathDB" id="AmoebaDB:DDB_G0283755"/>
<dbReference type="eggNOG" id="KOG0678">
    <property type="taxonomic scope" value="Eukaryota"/>
</dbReference>
<dbReference type="HOGENOM" id="CLU_027965_3_0_1"/>
<dbReference type="InParanoid" id="P42528"/>
<dbReference type="OMA" id="GIHYPIR"/>
<dbReference type="PhylomeDB" id="P42528"/>
<dbReference type="Reactome" id="R-DDI-2029482">
    <property type="pathway name" value="Regulation of actin dynamics for phagocytic cup formation"/>
</dbReference>
<dbReference type="Reactome" id="R-DDI-5663213">
    <property type="pathway name" value="RHO GTPases Activate WASPs and WAVEs"/>
</dbReference>
<dbReference type="PRO" id="PR:P42528"/>
<dbReference type="Proteomes" id="UP000002195">
    <property type="component" value="Chromosome 4"/>
</dbReference>
<dbReference type="GO" id="GO:0015629">
    <property type="term" value="C:actin cytoskeleton"/>
    <property type="evidence" value="ECO:0000314"/>
    <property type="project" value="dictyBase"/>
</dbReference>
<dbReference type="GO" id="GO:0005885">
    <property type="term" value="C:Arp2/3 protein complex"/>
    <property type="evidence" value="ECO:0000314"/>
    <property type="project" value="dictyBase"/>
</dbReference>
<dbReference type="GO" id="GO:0031252">
    <property type="term" value="C:cell leading edge"/>
    <property type="evidence" value="ECO:0000314"/>
    <property type="project" value="dictyBase"/>
</dbReference>
<dbReference type="GO" id="GO:0060187">
    <property type="term" value="C:cell pole"/>
    <property type="evidence" value="ECO:0000314"/>
    <property type="project" value="dictyBase"/>
</dbReference>
<dbReference type="GO" id="GO:0042995">
    <property type="term" value="C:cell projection"/>
    <property type="evidence" value="ECO:0000314"/>
    <property type="project" value="dictyBase"/>
</dbReference>
<dbReference type="GO" id="GO:0005905">
    <property type="term" value="C:clathrin-coated pit"/>
    <property type="evidence" value="ECO:0000314"/>
    <property type="project" value="dictyBase"/>
</dbReference>
<dbReference type="GO" id="GO:0030864">
    <property type="term" value="C:cortical actin cytoskeleton"/>
    <property type="evidence" value="ECO:0000314"/>
    <property type="project" value="dictyBase"/>
</dbReference>
<dbReference type="GO" id="GO:0005829">
    <property type="term" value="C:cytosol"/>
    <property type="evidence" value="ECO:0007669"/>
    <property type="project" value="UniProtKB-SubCell"/>
</dbReference>
<dbReference type="GO" id="GO:0030175">
    <property type="term" value="C:filopodium"/>
    <property type="evidence" value="ECO:0000314"/>
    <property type="project" value="dictyBase"/>
</dbReference>
<dbReference type="GO" id="GO:0030027">
    <property type="term" value="C:lamellipodium"/>
    <property type="evidence" value="ECO:0000314"/>
    <property type="project" value="dictyBase"/>
</dbReference>
<dbReference type="GO" id="GO:0061851">
    <property type="term" value="C:leading edge of lamellipodium"/>
    <property type="evidence" value="ECO:0000314"/>
    <property type="project" value="dictyBase"/>
</dbReference>
<dbReference type="GO" id="GO:0070685">
    <property type="term" value="C:macropinocytic cup"/>
    <property type="evidence" value="ECO:0000314"/>
    <property type="project" value="dictyBase"/>
</dbReference>
<dbReference type="GO" id="GO:0005739">
    <property type="term" value="C:mitochondrion"/>
    <property type="evidence" value="ECO:0000314"/>
    <property type="project" value="dictyBase"/>
</dbReference>
<dbReference type="GO" id="GO:0001891">
    <property type="term" value="C:phagocytic cup"/>
    <property type="evidence" value="ECO:0000314"/>
    <property type="project" value="dictyBase"/>
</dbReference>
<dbReference type="GO" id="GO:0097203">
    <property type="term" value="C:phagocytic cup lip"/>
    <property type="evidence" value="ECO:0000314"/>
    <property type="project" value="dictyBase"/>
</dbReference>
<dbReference type="GO" id="GO:0045335">
    <property type="term" value="C:phagocytic vesicle"/>
    <property type="evidence" value="ECO:0000314"/>
    <property type="project" value="dictyBase"/>
</dbReference>
<dbReference type="GO" id="GO:0030670">
    <property type="term" value="C:phagocytic vesicle membrane"/>
    <property type="evidence" value="ECO:0000314"/>
    <property type="project" value="dictyBase"/>
</dbReference>
<dbReference type="GO" id="GO:0032195">
    <property type="term" value="C:post-lysosomal vacuole"/>
    <property type="evidence" value="ECO:0000314"/>
    <property type="project" value="dictyBase"/>
</dbReference>
<dbReference type="GO" id="GO:0031143">
    <property type="term" value="C:pseudopodium"/>
    <property type="evidence" value="ECO:0000305"/>
    <property type="project" value="dictyBase"/>
</dbReference>
<dbReference type="GO" id="GO:0051015">
    <property type="term" value="F:actin filament binding"/>
    <property type="evidence" value="ECO:0000304"/>
    <property type="project" value="dictyBase"/>
</dbReference>
<dbReference type="GO" id="GO:0005524">
    <property type="term" value="F:ATP binding"/>
    <property type="evidence" value="ECO:0007669"/>
    <property type="project" value="UniProtKB-KW"/>
</dbReference>
<dbReference type="GO" id="GO:0030041">
    <property type="term" value="P:actin filament polymerization"/>
    <property type="evidence" value="ECO:0000316"/>
    <property type="project" value="dictyBase"/>
</dbReference>
<dbReference type="GO" id="GO:0045010">
    <property type="term" value="P:actin nucleation"/>
    <property type="evidence" value="ECO:0000304"/>
    <property type="project" value="dictyBase"/>
</dbReference>
<dbReference type="GO" id="GO:0034314">
    <property type="term" value="P:Arp2/3 complex-mediated actin nucleation"/>
    <property type="evidence" value="ECO:0000318"/>
    <property type="project" value="GO_Central"/>
</dbReference>
<dbReference type="GO" id="GO:0006887">
    <property type="term" value="P:exocytosis"/>
    <property type="evidence" value="ECO:0000270"/>
    <property type="project" value="dictyBase"/>
</dbReference>
<dbReference type="GO" id="GO:0006909">
    <property type="term" value="P:phagocytosis"/>
    <property type="evidence" value="ECO:0000270"/>
    <property type="project" value="dictyBase"/>
</dbReference>
<dbReference type="GO" id="GO:0009617">
    <property type="term" value="P:response to bacterium"/>
    <property type="evidence" value="ECO:0007007"/>
    <property type="project" value="dictyBase"/>
</dbReference>
<dbReference type="GO" id="GO:0046689">
    <property type="term" value="P:response to mercury ion"/>
    <property type="evidence" value="ECO:0000314"/>
    <property type="project" value="dictyBase"/>
</dbReference>
<dbReference type="CDD" id="cd10221">
    <property type="entry name" value="ASKHA_NBD_Arp3-like"/>
    <property type="match status" value="1"/>
</dbReference>
<dbReference type="FunFam" id="3.30.420.40:FF:000029">
    <property type="entry name" value="Actin-related protein 3"/>
    <property type="match status" value="1"/>
</dbReference>
<dbReference type="FunFam" id="3.90.640.10:FF:000006">
    <property type="entry name" value="Actin-related protein 3 (ARP3)"/>
    <property type="match status" value="1"/>
</dbReference>
<dbReference type="Gene3D" id="3.30.420.40">
    <property type="match status" value="2"/>
</dbReference>
<dbReference type="Gene3D" id="3.90.640.10">
    <property type="entry name" value="Actin, Chain A, domain 4"/>
    <property type="match status" value="1"/>
</dbReference>
<dbReference type="InterPro" id="IPR004000">
    <property type="entry name" value="Actin"/>
</dbReference>
<dbReference type="InterPro" id="IPR020902">
    <property type="entry name" value="Actin/actin-like_CS"/>
</dbReference>
<dbReference type="InterPro" id="IPR043129">
    <property type="entry name" value="ATPase_NBD"/>
</dbReference>
<dbReference type="PANTHER" id="PTHR11937">
    <property type="entry name" value="ACTIN"/>
    <property type="match status" value="1"/>
</dbReference>
<dbReference type="Pfam" id="PF00022">
    <property type="entry name" value="Actin"/>
    <property type="match status" value="1"/>
</dbReference>
<dbReference type="SMART" id="SM00268">
    <property type="entry name" value="ACTIN"/>
    <property type="match status" value="1"/>
</dbReference>
<dbReference type="SUPFAM" id="SSF53067">
    <property type="entry name" value="Actin-like ATPase domain"/>
    <property type="match status" value="2"/>
</dbReference>
<dbReference type="PROSITE" id="PS01132">
    <property type="entry name" value="ACTINS_ACT_LIKE"/>
    <property type="match status" value="1"/>
</dbReference>